<dbReference type="EMBL" id="X53671">
    <property type="protein sequence ID" value="CAA37711.1"/>
    <property type="molecule type" value="Genomic_DNA"/>
</dbReference>
<dbReference type="PIR" id="S11511">
    <property type="entry name" value="S11511"/>
</dbReference>
<dbReference type="SMR" id="P20389"/>
<dbReference type="GO" id="GO:0005634">
    <property type="term" value="C:nucleus"/>
    <property type="evidence" value="ECO:0007669"/>
    <property type="project" value="UniProtKB-SubCell"/>
</dbReference>
<dbReference type="GO" id="GO:0003677">
    <property type="term" value="F:DNA binding"/>
    <property type="evidence" value="ECO:0007669"/>
    <property type="project" value="UniProtKB-KW"/>
</dbReference>
<dbReference type="GO" id="GO:0003700">
    <property type="term" value="F:DNA-binding transcription factor activity"/>
    <property type="evidence" value="ECO:0007669"/>
    <property type="project" value="InterPro"/>
</dbReference>
<dbReference type="GO" id="GO:0046983">
    <property type="term" value="F:protein dimerization activity"/>
    <property type="evidence" value="ECO:0007669"/>
    <property type="project" value="InterPro"/>
</dbReference>
<dbReference type="CDD" id="cd11456">
    <property type="entry name" value="bHLHzip_N-Myc_like"/>
    <property type="match status" value="1"/>
</dbReference>
<dbReference type="FunFam" id="4.10.280.10:FF:000019">
    <property type="entry name" value="Myc proto-oncogene protein"/>
    <property type="match status" value="1"/>
</dbReference>
<dbReference type="Gene3D" id="4.10.280.10">
    <property type="entry name" value="Helix-loop-helix DNA-binding domain"/>
    <property type="match status" value="1"/>
</dbReference>
<dbReference type="InterPro" id="IPR011598">
    <property type="entry name" value="bHLH_dom"/>
</dbReference>
<dbReference type="InterPro" id="IPR036638">
    <property type="entry name" value="HLH_DNA-bd_sf"/>
</dbReference>
<dbReference type="InterPro" id="IPR050433">
    <property type="entry name" value="Myc_transcription_factors"/>
</dbReference>
<dbReference type="InterPro" id="IPR002418">
    <property type="entry name" value="Tscrpt_reg_Myc"/>
</dbReference>
<dbReference type="InterPro" id="IPR012682">
    <property type="entry name" value="Tscrpt_reg_Myc_N"/>
</dbReference>
<dbReference type="PANTHER" id="PTHR45851">
    <property type="entry name" value="MYC PROTO-ONCOGENE"/>
    <property type="match status" value="1"/>
</dbReference>
<dbReference type="Pfam" id="PF00010">
    <property type="entry name" value="HLH"/>
    <property type="match status" value="1"/>
</dbReference>
<dbReference type="Pfam" id="PF01056">
    <property type="entry name" value="Myc_N"/>
    <property type="match status" value="1"/>
</dbReference>
<dbReference type="PIRSF" id="PIRSF001705">
    <property type="entry name" value="Myc_protein"/>
    <property type="match status" value="1"/>
</dbReference>
<dbReference type="PRINTS" id="PR00044">
    <property type="entry name" value="LEUZIPPRMYC"/>
</dbReference>
<dbReference type="SMART" id="SM00353">
    <property type="entry name" value="HLH"/>
    <property type="match status" value="1"/>
</dbReference>
<dbReference type="SUPFAM" id="SSF47459">
    <property type="entry name" value="HLH, helix-loop-helix DNA-binding domain"/>
    <property type="match status" value="1"/>
</dbReference>
<dbReference type="PROSITE" id="PS50888">
    <property type="entry name" value="BHLH"/>
    <property type="match status" value="1"/>
</dbReference>
<name>MYC2_MARMO</name>
<keyword id="KW-0238">DNA-binding</keyword>
<keyword id="KW-0539">Nucleus</keyword>
<keyword id="KW-0656">Proto-oncogene</keyword>
<comment type="subunit">
    <text>Efficient DNA binding requires dimerization with another bHLH protein.</text>
</comment>
<comment type="subcellular location">
    <subcellularLocation>
        <location evidence="1">Nucleus</location>
    </subcellularLocation>
</comment>
<comment type="disease">
    <text evidence="3">N-MYC2 proto-oncogene protein is overexpressed in liver tumors. N-MYC2 is totally silent in normal liver and is probably a retroposon. WHV virus activates N-MYC2 by integration.</text>
</comment>
<organism>
    <name type="scientific">Marmota monax</name>
    <name type="common">Woodchuck</name>
    <dbReference type="NCBI Taxonomy" id="9995"/>
    <lineage>
        <taxon>Eukaryota</taxon>
        <taxon>Metazoa</taxon>
        <taxon>Chordata</taxon>
        <taxon>Craniata</taxon>
        <taxon>Vertebrata</taxon>
        <taxon>Euteleostomi</taxon>
        <taxon>Mammalia</taxon>
        <taxon>Eutheria</taxon>
        <taxon>Euarchontoglires</taxon>
        <taxon>Glires</taxon>
        <taxon>Rodentia</taxon>
        <taxon>Sciuromorpha</taxon>
        <taxon>Sciuridae</taxon>
        <taxon>Xerinae</taxon>
        <taxon>Marmotini</taxon>
        <taxon>Marmota</taxon>
    </lineage>
</organism>
<gene>
    <name type="primary">N-MYC2</name>
</gene>
<proteinExistence type="inferred from homology"/>
<sequence length="454" mass="49587">MRSCTVSTMPRMICRNADLEFDWLQPCFYPDEDDFYFSGPNSTPPGEDIWKKFELLPTPPLSPSCAFLELSTEPSDWASEMMLTEADLWGNPDEEDVFGPGGLGSLTPNPVILRDCMWSGFSAREKLERAMSEKMQHGHEPAATGPATQVPGAGAASPAGRGHSGTAGAALPAELAHPAAECVDPAVVFLLPVSKRNPVPVRVAPARAPARASAVGAAVARAAAPATAAVAAPPGLSSRPPNGGDHKVLSTSGEDALSDEVDEEEDEEEEIDVVTVEKSCKTGGTTFTLTVSPKNTALGLGREQSRELILQRSVPIYQQHNYAAPSPYVESEDAPPQKKIKREVSPHPLKSVIHPKGKSFSPRKSDSEDSVRRRNHNILERQRRNDLRSSFTTLRDHVPELVKNEKAAKVVILKKACEYVHYLQAKEHQLLMEKEKLQARQQQLLKIIELAWTF</sequence>
<accession>P20389</accession>
<feature type="chain" id="PRO_0000127331" description="N-myc 2 proto-oncogene protein">
    <location>
        <begin position="1"/>
        <end position="454"/>
    </location>
</feature>
<feature type="domain" description="bHLH" evidence="1">
    <location>
        <begin position="371"/>
        <end position="423"/>
    </location>
</feature>
<feature type="region of interest" description="Disordered" evidence="2">
    <location>
        <begin position="132"/>
        <end position="166"/>
    </location>
</feature>
<feature type="region of interest" description="Disordered" evidence="2">
    <location>
        <begin position="230"/>
        <end position="269"/>
    </location>
</feature>
<feature type="region of interest" description="Disordered" evidence="2">
    <location>
        <begin position="325"/>
        <end position="374"/>
    </location>
</feature>
<feature type="region of interest" description="Leucine-zipper">
    <location>
        <begin position="423"/>
        <end position="444"/>
    </location>
</feature>
<feature type="compositionally biased region" description="Low complexity" evidence="2">
    <location>
        <begin position="151"/>
        <end position="161"/>
    </location>
</feature>
<feature type="compositionally biased region" description="Acidic residues" evidence="2">
    <location>
        <begin position="256"/>
        <end position="269"/>
    </location>
</feature>
<feature type="compositionally biased region" description="Basic and acidic residues" evidence="2">
    <location>
        <begin position="363"/>
        <end position="374"/>
    </location>
</feature>
<evidence type="ECO:0000255" key="1">
    <source>
        <dbReference type="PROSITE-ProRule" id="PRU00981"/>
    </source>
</evidence>
<evidence type="ECO:0000256" key="2">
    <source>
        <dbReference type="SAM" id="MobiDB-lite"/>
    </source>
</evidence>
<evidence type="ECO:0000269" key="3">
    <source>
    </source>
</evidence>
<protein>
    <recommendedName>
        <fullName>N-myc 2 proto-oncogene protein</fullName>
    </recommendedName>
</protein>
<reference key="1">
    <citation type="journal article" date="1990" name="Nature">
        <title>Frequent activation of N-myc genes by hepadnavirus insertion in woodchuck liver tumours.</title>
        <authorList>
            <person name="Fourel G."/>
            <person name="Trepo G."/>
            <person name="Bougueleret L."/>
            <person name="Henglein B."/>
            <person name="Ponzetto A."/>
            <person name="Tiollais P."/>
            <person name="Buendia M.-A."/>
        </authorList>
    </citation>
    <scope>NUCLEOTIDE SEQUENCE [GENOMIC DNA]</scope>
</reference>